<keyword id="KW-0249">Electron transport</keyword>
<keyword id="KW-0472">Membrane</keyword>
<keyword id="KW-0496">Mitochondrion</keyword>
<keyword id="KW-0999">Mitochondrion inner membrane</keyword>
<keyword id="KW-0520">NAD</keyword>
<keyword id="KW-1185">Reference proteome</keyword>
<keyword id="KW-0679">Respiratory chain</keyword>
<keyword id="KW-1278">Translocase</keyword>
<keyword id="KW-0812">Transmembrane</keyword>
<keyword id="KW-1133">Transmembrane helix</keyword>
<keyword id="KW-0813">Transport</keyword>
<keyword id="KW-0830">Ubiquinone</keyword>
<proteinExistence type="inferred from homology"/>
<reference key="1">
    <citation type="submission" date="2002-03" db="EMBL/GenBank/DDBJ databases">
        <title>Complete sequence of the Bos indicus mitochondrial genome.</title>
        <authorList>
            <person name="Hiendleder S."/>
            <person name="Lewalski H."/>
            <person name="Wolf E."/>
        </authorList>
    </citation>
    <scope>NUCLEOTIDE SEQUENCE [GENOMIC DNA]</scope>
    <source>
        <tissue>Liver</tissue>
    </source>
</reference>
<reference key="2">
    <citation type="submission" date="2002-06" db="EMBL/GenBank/DDBJ databases">
        <title>The complete mitochondrial genome nucleotide sequence of Bos indicus.</title>
        <authorList>
            <person name="Miretti M.M."/>
            <person name="Pereira H.A. Jr."/>
            <person name="Greggio C."/>
            <person name="Suzuki J. Jr."/>
            <person name="Ferro J.A."/>
            <person name="Ferro M.I."/>
            <person name="Meirelles F."/>
            <person name="Garcia J.M."/>
            <person name="Smith L.C."/>
        </authorList>
    </citation>
    <scope>NUCLEOTIDE SEQUENCE [GENOMIC DNA]</scope>
</reference>
<organism>
    <name type="scientific">Bos indicus</name>
    <name type="common">Zebu</name>
    <dbReference type="NCBI Taxonomy" id="9915"/>
    <lineage>
        <taxon>Eukaryota</taxon>
        <taxon>Metazoa</taxon>
        <taxon>Chordata</taxon>
        <taxon>Craniata</taxon>
        <taxon>Vertebrata</taxon>
        <taxon>Euteleostomi</taxon>
        <taxon>Mammalia</taxon>
        <taxon>Eutheria</taxon>
        <taxon>Laurasiatheria</taxon>
        <taxon>Artiodactyla</taxon>
        <taxon>Ruminantia</taxon>
        <taxon>Pecora</taxon>
        <taxon>Bovidae</taxon>
        <taxon>Bovinae</taxon>
        <taxon>Bos</taxon>
    </lineage>
</organism>
<feature type="chain" id="PRO_0000253522" description="NADH-ubiquinone oxidoreductase chain 5">
    <location>
        <begin position="1"/>
        <end position="606"/>
    </location>
</feature>
<feature type="transmembrane region" description="Helical" evidence="3">
    <location>
        <begin position="4"/>
        <end position="24"/>
    </location>
</feature>
<feature type="transmembrane region" description="Helical" evidence="3">
    <location>
        <begin position="43"/>
        <end position="63"/>
    </location>
</feature>
<feature type="transmembrane region" description="Helical" evidence="3">
    <location>
        <begin position="87"/>
        <end position="107"/>
    </location>
</feature>
<feature type="transmembrane region" description="Helical" evidence="3">
    <location>
        <begin position="117"/>
        <end position="137"/>
    </location>
</feature>
<feature type="transmembrane region" description="Helical" evidence="3">
    <location>
        <begin position="140"/>
        <end position="160"/>
    </location>
</feature>
<feature type="transmembrane region" description="Helical" evidence="3">
    <location>
        <begin position="171"/>
        <end position="191"/>
    </location>
</feature>
<feature type="transmembrane region" description="Helical" evidence="3">
    <location>
        <begin position="213"/>
        <end position="233"/>
    </location>
</feature>
<feature type="transmembrane region" description="Helical" evidence="3">
    <location>
        <begin position="241"/>
        <end position="261"/>
    </location>
</feature>
<feature type="transmembrane region" description="Helical" evidence="3">
    <location>
        <begin position="272"/>
        <end position="292"/>
    </location>
</feature>
<feature type="transmembrane region" description="Helical" evidence="3">
    <location>
        <begin position="310"/>
        <end position="330"/>
    </location>
</feature>
<feature type="transmembrane region" description="Helical" evidence="3">
    <location>
        <begin position="366"/>
        <end position="386"/>
    </location>
</feature>
<feature type="transmembrane region" description="Helical" evidence="3">
    <location>
        <begin position="413"/>
        <end position="433"/>
    </location>
</feature>
<feature type="transmembrane region" description="Helical" evidence="3">
    <location>
        <begin position="457"/>
        <end position="477"/>
    </location>
</feature>
<feature type="transmembrane region" description="Helical" evidence="3">
    <location>
        <begin position="482"/>
        <end position="502"/>
    </location>
</feature>
<feature type="transmembrane region" description="Helical" evidence="3">
    <location>
        <begin position="582"/>
        <end position="602"/>
    </location>
</feature>
<feature type="sequence conflict" description="In Ref. 2; AAM95740." evidence="4" ref="2">
    <original>M</original>
    <variation>T</variation>
    <location>
        <position position="507"/>
    </location>
</feature>
<evidence type="ECO:0000250" key="1">
    <source>
        <dbReference type="UniProtKB" id="P03915"/>
    </source>
</evidence>
<evidence type="ECO:0000250" key="2">
    <source>
        <dbReference type="UniProtKB" id="P03920"/>
    </source>
</evidence>
<evidence type="ECO:0000255" key="3"/>
<evidence type="ECO:0000305" key="4"/>
<accession>Q576B4</accession>
<accession>Q6EMS1</accession>
<gene>
    <name type="primary">MT-ND5</name>
    <name type="synonym">MTND5</name>
    <name type="synonym">NADH5</name>
    <name type="synonym">ND5</name>
</gene>
<protein>
    <recommendedName>
        <fullName>NADH-ubiquinone oxidoreductase chain 5</fullName>
        <ecNumber evidence="1">7.1.1.2</ecNumber>
    </recommendedName>
    <alternativeName>
        <fullName>NADH dehydrogenase subunit 5</fullName>
    </alternativeName>
</protein>
<sequence>MNMFSSLSLVTLLLLTMPIMMMSLNTYKPSNYPLYVKTAISYAFITSMIPTMMFIHSGQELIISNWHWLTIQTLKLSLSFKMDYFSMMFTPVALFVTWSIMEFSMWYMHSDPNINKFFKYLLLFLITMLILVTANNLFQLFIGWEGVGIMSFLLIGWWYGRADANTAALQAVLYNRIGDIGFILAMAWFLTNLNTWDLQQIFMLNPSDSNMPLIGLALAATGKSAQFGLHPWLPSAMEGPTPVSALLHSSTMVVAGIFLLIRFYPLTENNKFIQSITLCLGAITTLFTAMCALTQNDIKKIIAFSTSSQLGLMMVTIGINQPYLAFLHICTHAFFKAMLFMCSGSIIHSLNDEQDIRKMGGLFKAMPFTTTALIVGSLALTGMPFLTGFYSKDLIIEAANTSYTNAWALLMTLIATSFTAIYSTRIIFFALLGQPRFPTLVSINENNPLLINSIKRLLIGSLFAGYIISNNIPPTTIPQMTMPYYLKTTALIVTILGFILALEISNMTKNLKYHYPSNAFKFSTLLGYFPTIMHRLAPYMNLSMSQKSASSLLDLIWLEAILPKTISLAQMKASTLVTNQKGLIKLYFLSFLITILISMMLFNFHE</sequence>
<geneLocation type="mitochondrion"/>
<comment type="function">
    <text evidence="1">Core subunit of the mitochondrial membrane respiratory chain NADH dehydrogenase (Complex I) which catalyzes electron transfer from NADH through the respiratory chain, using ubiquinone as an electron acceptor. Essential for the catalytic activity and assembly of complex I.</text>
</comment>
<comment type="catalytic activity">
    <reaction evidence="1">
        <text>a ubiquinone + NADH + 5 H(+)(in) = a ubiquinol + NAD(+) + 4 H(+)(out)</text>
        <dbReference type="Rhea" id="RHEA:29091"/>
        <dbReference type="Rhea" id="RHEA-COMP:9565"/>
        <dbReference type="Rhea" id="RHEA-COMP:9566"/>
        <dbReference type="ChEBI" id="CHEBI:15378"/>
        <dbReference type="ChEBI" id="CHEBI:16389"/>
        <dbReference type="ChEBI" id="CHEBI:17976"/>
        <dbReference type="ChEBI" id="CHEBI:57540"/>
        <dbReference type="ChEBI" id="CHEBI:57945"/>
        <dbReference type="EC" id="7.1.1.2"/>
    </reaction>
</comment>
<comment type="subunit">
    <text evidence="2">Core subunit of respiratory chain NADH dehydrogenase (Complex I) which is composed of 45 different subunits.</text>
</comment>
<comment type="subcellular location">
    <subcellularLocation>
        <location evidence="2">Mitochondrion inner membrane</location>
        <topology evidence="3">Multi-pass membrane protein</topology>
    </subcellularLocation>
</comment>
<dbReference type="EC" id="7.1.1.2" evidence="1"/>
<dbReference type="EMBL" id="AF492350">
    <property type="protein sequence ID" value="AAQ06590.1"/>
    <property type="molecule type" value="Genomic_DNA"/>
</dbReference>
<dbReference type="EMBL" id="AY126697">
    <property type="protein sequence ID" value="AAM95740.1"/>
    <property type="molecule type" value="Genomic_DNA"/>
</dbReference>
<dbReference type="RefSeq" id="YP_052707.1">
    <property type="nucleotide sequence ID" value="NC_005971.1"/>
</dbReference>
<dbReference type="SMR" id="Q576B4"/>
<dbReference type="GeneID" id="2885979"/>
<dbReference type="KEGG" id="biu:2885979"/>
<dbReference type="CTD" id="4540"/>
<dbReference type="OrthoDB" id="40937at91561"/>
<dbReference type="Proteomes" id="UP000515132">
    <property type="component" value="Mitochondrion MT"/>
</dbReference>
<dbReference type="GO" id="GO:0005743">
    <property type="term" value="C:mitochondrial inner membrane"/>
    <property type="evidence" value="ECO:0000250"/>
    <property type="project" value="UniProtKB"/>
</dbReference>
<dbReference type="GO" id="GO:0008137">
    <property type="term" value="F:NADH dehydrogenase (ubiquinone) activity"/>
    <property type="evidence" value="ECO:0000250"/>
    <property type="project" value="UniProtKB"/>
</dbReference>
<dbReference type="GO" id="GO:0015990">
    <property type="term" value="P:electron transport coupled proton transport"/>
    <property type="evidence" value="ECO:0007669"/>
    <property type="project" value="TreeGrafter"/>
</dbReference>
<dbReference type="GO" id="GO:0006120">
    <property type="term" value="P:mitochondrial electron transport, NADH to ubiquinone"/>
    <property type="evidence" value="ECO:0000250"/>
    <property type="project" value="UniProtKB"/>
</dbReference>
<dbReference type="GO" id="GO:0032981">
    <property type="term" value="P:mitochondrial respiratory chain complex I assembly"/>
    <property type="evidence" value="ECO:0000250"/>
    <property type="project" value="UniProtKB"/>
</dbReference>
<dbReference type="InterPro" id="IPR010934">
    <property type="entry name" value="NADH_DH_su5_C"/>
</dbReference>
<dbReference type="InterPro" id="IPR018393">
    <property type="entry name" value="NADHpl_OxRdtase_5_subgr"/>
</dbReference>
<dbReference type="InterPro" id="IPR001750">
    <property type="entry name" value="ND/Mrp_TM"/>
</dbReference>
<dbReference type="InterPro" id="IPR003945">
    <property type="entry name" value="NU5C-like"/>
</dbReference>
<dbReference type="InterPro" id="IPR001516">
    <property type="entry name" value="Proton_antipo_N"/>
</dbReference>
<dbReference type="NCBIfam" id="TIGR01974">
    <property type="entry name" value="NDH_I_L"/>
    <property type="match status" value="1"/>
</dbReference>
<dbReference type="PANTHER" id="PTHR42829">
    <property type="entry name" value="NADH-UBIQUINONE OXIDOREDUCTASE CHAIN 5"/>
    <property type="match status" value="1"/>
</dbReference>
<dbReference type="PANTHER" id="PTHR42829:SF2">
    <property type="entry name" value="NADH-UBIQUINONE OXIDOREDUCTASE CHAIN 5"/>
    <property type="match status" value="1"/>
</dbReference>
<dbReference type="Pfam" id="PF06455">
    <property type="entry name" value="NADH5_C"/>
    <property type="match status" value="1"/>
</dbReference>
<dbReference type="Pfam" id="PF00361">
    <property type="entry name" value="Proton_antipo_M"/>
    <property type="match status" value="1"/>
</dbReference>
<dbReference type="Pfam" id="PF00662">
    <property type="entry name" value="Proton_antipo_N"/>
    <property type="match status" value="1"/>
</dbReference>
<dbReference type="PRINTS" id="PR01434">
    <property type="entry name" value="NADHDHGNASE5"/>
</dbReference>
<name>NU5M_BOSIN</name>